<gene>
    <name type="primary">VPS25</name>
    <name type="synonym">DERP9</name>
    <name type="synonym">EAP20</name>
</gene>
<reference key="1">
    <citation type="submission" date="1998-05" db="EMBL/GenBank/DDBJ databases">
        <title>Molecular cloning of a dermal papilla derived gene.</title>
        <authorList>
            <person name="Ikeda A."/>
            <person name="Ukai Y."/>
            <person name="Yamashita M."/>
            <person name="Yoshimoto M."/>
        </authorList>
    </citation>
    <scope>NUCLEOTIDE SEQUENCE [MRNA]</scope>
    <source>
        <tissue>Hair follicle dermal papilla</tissue>
    </source>
</reference>
<reference key="2">
    <citation type="journal article" date="2004" name="Nat. Genet.">
        <title>Complete sequencing and characterization of 21,243 full-length human cDNAs.</title>
        <authorList>
            <person name="Ota T."/>
            <person name="Suzuki Y."/>
            <person name="Nishikawa T."/>
            <person name="Otsuki T."/>
            <person name="Sugiyama T."/>
            <person name="Irie R."/>
            <person name="Wakamatsu A."/>
            <person name="Hayashi K."/>
            <person name="Sato H."/>
            <person name="Nagai K."/>
            <person name="Kimura K."/>
            <person name="Makita H."/>
            <person name="Sekine M."/>
            <person name="Obayashi M."/>
            <person name="Nishi T."/>
            <person name="Shibahara T."/>
            <person name="Tanaka T."/>
            <person name="Ishii S."/>
            <person name="Yamamoto J."/>
            <person name="Saito K."/>
            <person name="Kawai Y."/>
            <person name="Isono Y."/>
            <person name="Nakamura Y."/>
            <person name="Nagahari K."/>
            <person name="Murakami K."/>
            <person name="Yasuda T."/>
            <person name="Iwayanagi T."/>
            <person name="Wagatsuma M."/>
            <person name="Shiratori A."/>
            <person name="Sudo H."/>
            <person name="Hosoiri T."/>
            <person name="Kaku Y."/>
            <person name="Kodaira H."/>
            <person name="Kondo H."/>
            <person name="Sugawara M."/>
            <person name="Takahashi M."/>
            <person name="Kanda K."/>
            <person name="Yokoi T."/>
            <person name="Furuya T."/>
            <person name="Kikkawa E."/>
            <person name="Omura Y."/>
            <person name="Abe K."/>
            <person name="Kamihara K."/>
            <person name="Katsuta N."/>
            <person name="Sato K."/>
            <person name="Tanikawa M."/>
            <person name="Yamazaki M."/>
            <person name="Ninomiya K."/>
            <person name="Ishibashi T."/>
            <person name="Yamashita H."/>
            <person name="Murakawa K."/>
            <person name="Fujimori K."/>
            <person name="Tanai H."/>
            <person name="Kimata M."/>
            <person name="Watanabe M."/>
            <person name="Hiraoka S."/>
            <person name="Chiba Y."/>
            <person name="Ishida S."/>
            <person name="Ono Y."/>
            <person name="Takiguchi S."/>
            <person name="Watanabe S."/>
            <person name="Yosida M."/>
            <person name="Hotuta T."/>
            <person name="Kusano J."/>
            <person name="Kanehori K."/>
            <person name="Takahashi-Fujii A."/>
            <person name="Hara H."/>
            <person name="Tanase T.-O."/>
            <person name="Nomura Y."/>
            <person name="Togiya S."/>
            <person name="Komai F."/>
            <person name="Hara R."/>
            <person name="Takeuchi K."/>
            <person name="Arita M."/>
            <person name="Imose N."/>
            <person name="Musashino K."/>
            <person name="Yuuki H."/>
            <person name="Oshima A."/>
            <person name="Sasaki N."/>
            <person name="Aotsuka S."/>
            <person name="Yoshikawa Y."/>
            <person name="Matsunawa H."/>
            <person name="Ichihara T."/>
            <person name="Shiohata N."/>
            <person name="Sano S."/>
            <person name="Moriya S."/>
            <person name="Momiyama H."/>
            <person name="Satoh N."/>
            <person name="Takami S."/>
            <person name="Terashima Y."/>
            <person name="Suzuki O."/>
            <person name="Nakagawa S."/>
            <person name="Senoh A."/>
            <person name="Mizoguchi H."/>
            <person name="Goto Y."/>
            <person name="Shimizu F."/>
            <person name="Wakebe H."/>
            <person name="Hishigaki H."/>
            <person name="Watanabe T."/>
            <person name="Sugiyama A."/>
            <person name="Takemoto M."/>
            <person name="Kawakami B."/>
            <person name="Yamazaki M."/>
            <person name="Watanabe K."/>
            <person name="Kumagai A."/>
            <person name="Itakura S."/>
            <person name="Fukuzumi Y."/>
            <person name="Fujimori Y."/>
            <person name="Komiyama M."/>
            <person name="Tashiro H."/>
            <person name="Tanigami A."/>
            <person name="Fujiwara T."/>
            <person name="Ono T."/>
            <person name="Yamada K."/>
            <person name="Fujii Y."/>
            <person name="Ozaki K."/>
            <person name="Hirao M."/>
            <person name="Ohmori Y."/>
            <person name="Kawabata A."/>
            <person name="Hikiji T."/>
            <person name="Kobatake N."/>
            <person name="Inagaki H."/>
            <person name="Ikema Y."/>
            <person name="Okamoto S."/>
            <person name="Okitani R."/>
            <person name="Kawakami T."/>
            <person name="Noguchi S."/>
            <person name="Itoh T."/>
            <person name="Shigeta K."/>
            <person name="Senba T."/>
            <person name="Matsumura K."/>
            <person name="Nakajima Y."/>
            <person name="Mizuno T."/>
            <person name="Morinaga M."/>
            <person name="Sasaki M."/>
            <person name="Togashi T."/>
            <person name="Oyama M."/>
            <person name="Hata H."/>
            <person name="Watanabe M."/>
            <person name="Komatsu T."/>
            <person name="Mizushima-Sugano J."/>
            <person name="Satoh T."/>
            <person name="Shirai Y."/>
            <person name="Takahashi Y."/>
            <person name="Nakagawa K."/>
            <person name="Okumura K."/>
            <person name="Nagase T."/>
            <person name="Nomura N."/>
            <person name="Kikuchi H."/>
            <person name="Masuho Y."/>
            <person name="Yamashita R."/>
            <person name="Nakai K."/>
            <person name="Yada T."/>
            <person name="Nakamura Y."/>
            <person name="Ohara O."/>
            <person name="Isogai T."/>
            <person name="Sugano S."/>
        </authorList>
    </citation>
    <scope>NUCLEOTIDE SEQUENCE [LARGE SCALE MRNA]</scope>
    <source>
        <tissue>Cerebellum</tissue>
    </source>
</reference>
<reference key="3">
    <citation type="submission" date="2005-07" db="EMBL/GenBank/DDBJ databases">
        <authorList>
            <person name="Mural R.J."/>
            <person name="Istrail S."/>
            <person name="Sutton G.G."/>
            <person name="Florea L."/>
            <person name="Halpern A.L."/>
            <person name="Mobarry C.M."/>
            <person name="Lippert R."/>
            <person name="Walenz B."/>
            <person name="Shatkay H."/>
            <person name="Dew I."/>
            <person name="Miller J.R."/>
            <person name="Flanigan M.J."/>
            <person name="Edwards N.J."/>
            <person name="Bolanos R."/>
            <person name="Fasulo D."/>
            <person name="Halldorsson B.V."/>
            <person name="Hannenhalli S."/>
            <person name="Turner R."/>
            <person name="Yooseph S."/>
            <person name="Lu F."/>
            <person name="Nusskern D.R."/>
            <person name="Shue B.C."/>
            <person name="Zheng X.H."/>
            <person name="Zhong F."/>
            <person name="Delcher A.L."/>
            <person name="Huson D.H."/>
            <person name="Kravitz S.A."/>
            <person name="Mouchard L."/>
            <person name="Reinert K."/>
            <person name="Remington K.A."/>
            <person name="Clark A.G."/>
            <person name="Waterman M.S."/>
            <person name="Eichler E.E."/>
            <person name="Adams M.D."/>
            <person name="Hunkapiller M.W."/>
            <person name="Myers E.W."/>
            <person name="Venter J.C."/>
        </authorList>
    </citation>
    <scope>NUCLEOTIDE SEQUENCE [LARGE SCALE GENOMIC DNA]</scope>
</reference>
<reference key="4">
    <citation type="journal article" date="2004" name="Genome Res.">
        <title>The status, quality, and expansion of the NIH full-length cDNA project: the Mammalian Gene Collection (MGC).</title>
        <authorList>
            <consortium name="The MGC Project Team"/>
        </authorList>
    </citation>
    <scope>NUCLEOTIDE SEQUENCE [LARGE SCALE MRNA]</scope>
    <source>
        <tissue>Skin</tissue>
    </source>
</reference>
<reference key="5">
    <citation type="journal article" date="2003" name="Cell">
        <title>The protein network of HIV budding.</title>
        <authorList>
            <person name="von Schwedler U.K."/>
            <person name="Stuchell M."/>
            <person name="Mueller B."/>
            <person name="Ward D.M."/>
            <person name="Chung H.-Y."/>
            <person name="Morita E."/>
            <person name="Wang H.E."/>
            <person name="Davis T."/>
            <person name="He G.P."/>
            <person name="Cimbora D.M."/>
            <person name="Scott A."/>
            <person name="Kraeusslich H.-G."/>
            <person name="Kaplan J."/>
            <person name="Morham S.G."/>
            <person name="Sundquist W.I."/>
        </authorList>
    </citation>
    <scope>INTERACTION WITH SNF8; VPS36 AND CHMP6</scope>
</reference>
<reference key="6">
    <citation type="journal article" date="2003" name="Proc. Natl. Acad. Sci. U.S.A.">
        <title>Divergent retroviral late-budding domains recruit vacuolar protein sorting factors by using alternative adaptor proteins.</title>
        <authorList>
            <person name="Martin-Serrano J."/>
            <person name="Yarovoy A."/>
            <person name="Perez-Caballero D."/>
            <person name="Bieniasz P.D."/>
        </authorList>
    </citation>
    <scope>IDENTIFICATION IN THE ESCRT-II COMPLEX</scope>
    <scope>INTERACTION WITH VPS36; SNF8 AND CHMP6</scope>
</reference>
<reference key="7">
    <citation type="journal article" date="2003" name="Proc. Natl. Acad. Sci. U.S.A.">
        <authorList>
            <person name="Martin-Serrano J."/>
            <person name="Yarovoy A."/>
            <person name="Perez-Caballero D."/>
            <person name="Bieniasz P.D."/>
        </authorList>
    </citation>
    <scope>ERRATUM OF PUBMED:14519844</scope>
</reference>
<reference key="8">
    <citation type="journal article" date="2005" name="Biochem. J.">
        <title>Human CHMP6, a myristoylated ESCRT-III protein, interacts directly with an ESCRT-II component EAP20 and regulates endosomal cargo sorting.</title>
        <authorList>
            <person name="Yorikawa C."/>
            <person name="Shibata H."/>
            <person name="Waguri S."/>
            <person name="Hatta K."/>
            <person name="Horii M."/>
            <person name="Katoh K."/>
            <person name="Kobayashi T."/>
            <person name="Uchiyama Y."/>
            <person name="Maki M."/>
        </authorList>
    </citation>
    <scope>SUBCELLULAR LOCATION</scope>
    <scope>INTERACTION WITH CHMP6</scope>
</reference>
<reference key="9">
    <citation type="journal article" date="2004" name="J. Cell Biol.">
        <title>Misfolding diverts CFTR from recycling to degradation: quality control at early endosomes.</title>
        <authorList>
            <person name="Sharma M."/>
            <person name="Pampinella F."/>
            <person name="Nemes C."/>
            <person name="Benharouga M."/>
            <person name="So J."/>
            <person name="Du K."/>
            <person name="Bache K.G."/>
            <person name="Papsin B."/>
            <person name="Zerangue N."/>
            <person name="Stenmark H."/>
            <person name="Lukacs G.L."/>
        </authorList>
    </citation>
    <scope>INTERACTION WITH MISFOLDED CFTR</scope>
</reference>
<reference key="10">
    <citation type="journal article" date="2006" name="BMC Evol. Biol.">
        <title>Genetic structure and evolution of the Vps25 family, a yeast ESCRT-II component.</title>
        <authorList>
            <person name="Slater R."/>
            <person name="Bishop N.E."/>
        </authorList>
    </citation>
    <scope>TISSUE SPECIFICITY</scope>
</reference>
<reference key="11">
    <citation type="journal article" date="2006" name="J. Virol.">
        <title>Human ESCRT-II complex and its role in human immunodeficiency virus type 1 release.</title>
        <authorList>
            <person name="Langelier C."/>
            <person name="von Schwedler U.K."/>
            <person name="Fisher R.D."/>
            <person name="De Domenico I."/>
            <person name="White P.L."/>
            <person name="Hill C.P."/>
            <person name="Kaplan J."/>
            <person name="Ward D."/>
            <person name="Sundquist W.I."/>
        </authorList>
    </citation>
    <scope>INTERACTION WITH SNF8; VPS36 AND CHMP6</scope>
    <scope>SUBCELLULAR LOCATION</scope>
</reference>
<reference key="12">
    <citation type="journal article" date="2008" name="J. Biol. Chem.">
        <title>Avian sarcoma virus and human immunodeficiency virus, type 1 use different subsets of ESCRT proteins to facilitate the budding process.</title>
        <authorList>
            <person name="Pincetic A."/>
            <person name="Medina G."/>
            <person name="Carter C."/>
            <person name="Leis J."/>
        </authorList>
    </citation>
    <scope>FUNCTION</scope>
</reference>
<reference key="13">
    <citation type="journal article" date="2011" name="BMC Syst. Biol.">
        <title>Initial characterization of the human central proteome.</title>
        <authorList>
            <person name="Burkard T.R."/>
            <person name="Planyavsky M."/>
            <person name="Kaupe I."/>
            <person name="Breitwieser F.P."/>
            <person name="Buerckstuemmer T."/>
            <person name="Bennett K.L."/>
            <person name="Superti-Furga G."/>
            <person name="Colinge J."/>
        </authorList>
    </citation>
    <scope>IDENTIFICATION BY MASS SPECTROMETRY [LARGE SCALE ANALYSIS]</scope>
</reference>
<reference key="14">
    <citation type="journal article" date="2008" name="Dev. Cell">
        <title>Integrated structural model and membrane targeting mechanism of the human ESCRT-II complex.</title>
        <authorList>
            <person name="Im Y.J."/>
            <person name="Hurley J.H."/>
        </authorList>
    </citation>
    <scope>X-RAY CRYSTALLOGRAPHY (2.61 ANGSTROMS) IN COMPLEX WITH SNF8 AND VPS36</scope>
</reference>
<reference key="15">
    <citation type="journal article" date="2009" name="Dev. Cell">
        <title>Structure and function of the ESCRT-II-III interface in multivesicular body biogenesis.</title>
        <authorList>
            <person name="Im Y.J."/>
            <person name="Wollert T."/>
            <person name="Boura E."/>
            <person name="Hurley J.H."/>
        </authorList>
    </citation>
    <scope>X-RAY CRYSTALLOGRAPHY (2.0 ANGSTROMS) OF 102-176 IN COMPLEX WITH CHMP6</scope>
    <scope>MUTAGENESIS OF VAL-124 AND THR-126</scope>
</reference>
<proteinExistence type="evidence at protein level"/>
<sequence>MAMSFEWPWQYRFPPFFTLQPNVDTRQKQLAAWCSLVLSFCRLHKQSSMTVMEAQESPLFNNVKLQRKLPVESIQIVLEELRKKGNLEWLDKSKSSFLIMWRRPEEWGKLIYQWVSRSGQNNSVFTLYELTNGEDTEDEEFHGLDEATLLRALQALQQEHKAEIITVSDGRGVKFF</sequence>
<accession>Q9BRG1</accession>
<accession>B2R581</accession>
<name>VPS25_HUMAN</name>
<comment type="function">
    <text evidence="9">Component of the ESCRT-II complex (endosomal sorting complex required for transport II), which is required for multivesicular body (MVB) formation and sorting of endosomal cargo proteins into MVBs. The MVB pathway mediates delivery of transmembrane proteins into the lumen of the lysosome for degradation. The ESCRT-II complex is probably involved in the recruitment of the ESCRT-III complex. The ESCRT-II complex may also play a role in transcription regulation, possibly via its interaction with ELL. The ESCRT-II complex may be involved in facilitating the budding of certain RNA viruses.</text>
</comment>
<comment type="subunit">
    <text evidence="1 2 3 4 5 7 8 10">Component of a complex at least composed of ELL, SNF8/EAP30, VPS25/EAP20 and VPS36/EAP45 (By similarity). Component of the endosomal sorting complex required for transport II (ESCRT-II), composed of SNF8, VPS36 and 2 copies of VPS25. Interacts with CFTR; the interaction requires misfolded CFTR. Interacts (via C-terminal half) with the ESCRT-III subunit CHMP6 (via N-terminal half).</text>
</comment>
<comment type="interaction">
    <interactant intactId="EBI-741945">
        <id>Q9BRG1</id>
    </interactant>
    <interactant intactId="EBI-19946665">
        <id>Q86U10</id>
        <label>ASPG</label>
    </interactant>
    <organismsDiffer>false</organismsDiffer>
    <experiments>5</experiments>
</comment>
<comment type="interaction">
    <interactant intactId="EBI-741945">
        <id>Q9BRG1</id>
    </interactant>
    <interactant intactId="EBI-6958971">
        <id>Q9BPU9</id>
        <label>B9D2</label>
    </interactant>
    <organismsDiffer>false</organismsDiffer>
    <experiments>3</experiments>
</comment>
<comment type="interaction">
    <interactant intactId="EBI-741945">
        <id>Q9BRG1</id>
    </interactant>
    <interactant intactId="EBI-724373">
        <id>Q7L4P6</id>
        <label>BEND5</label>
    </interactant>
    <organismsDiffer>false</organismsDiffer>
    <experiments>3</experiments>
</comment>
<comment type="interaction">
    <interactant intactId="EBI-741945">
        <id>Q9BRG1</id>
    </interactant>
    <interactant intactId="EBI-953896">
        <id>Q9NP55</id>
        <label>BPIFA1</label>
    </interactant>
    <organismsDiffer>false</organismsDiffer>
    <experiments>3</experiments>
</comment>
<comment type="interaction">
    <interactant intactId="EBI-741945">
        <id>Q9BRG1</id>
    </interactant>
    <interactant intactId="EBI-1049648">
        <id>Q96FZ7</id>
        <label>CHMP6</label>
    </interactant>
    <organismsDiffer>false</organismsDiffer>
    <experiments>8</experiments>
</comment>
<comment type="interaction">
    <interactant intactId="EBI-741945">
        <id>Q9BRG1</id>
    </interactant>
    <interactant intactId="EBI-2872414">
        <id>Q8IUI8</id>
        <label>CRLF3</label>
    </interactant>
    <organismsDiffer>false</organismsDiffer>
    <experiments>12</experiments>
</comment>
<comment type="interaction">
    <interactant intactId="EBI-741945">
        <id>Q9BRG1</id>
    </interactant>
    <interactant intactId="EBI-79165">
        <id>Q9NRD5</id>
        <label>PICK1</label>
    </interactant>
    <organismsDiffer>false</organismsDiffer>
    <experiments>3</experiments>
</comment>
<comment type="interaction">
    <interactant intactId="EBI-741945">
        <id>Q9BRG1</id>
    </interactant>
    <interactant intactId="EBI-307352">
        <id>Q04864</id>
        <label>REL</label>
    </interactant>
    <organismsDiffer>false</organismsDiffer>
    <experiments>4</experiments>
</comment>
<comment type="interaction">
    <interactant intactId="EBI-741945">
        <id>Q9BRG1</id>
    </interactant>
    <interactant intactId="EBI-742426">
        <id>Q9H190</id>
        <label>SDCBP2</label>
    </interactant>
    <organismsDiffer>false</organismsDiffer>
    <experiments>3</experiments>
</comment>
<comment type="interaction">
    <interactant intactId="EBI-741945">
        <id>Q9BRG1</id>
    </interactant>
    <interactant intactId="EBI-2009297">
        <id>Q6ZU15</id>
        <label>SEPTIN14</label>
    </interactant>
    <organismsDiffer>false</organismsDiffer>
    <experiments>3</experiments>
</comment>
<comment type="interaction">
    <interactant intactId="EBI-741945">
        <id>Q9BRG1</id>
    </interactant>
    <interactant intactId="EBI-747719">
        <id>Q96H20</id>
        <label>SNF8</label>
    </interactant>
    <organismsDiffer>false</organismsDiffer>
    <experiments>20</experiments>
</comment>
<comment type="interaction">
    <interactant intactId="EBI-741945">
        <id>Q9BRG1</id>
    </interactant>
    <interactant intactId="EBI-742688">
        <id>Q9NZD8</id>
        <label>SPG21</label>
    </interactant>
    <organismsDiffer>false</organismsDiffer>
    <experiments>3</experiments>
</comment>
<comment type="interaction">
    <interactant intactId="EBI-741945">
        <id>Q9BRG1</id>
    </interactant>
    <interactant intactId="EBI-6872807">
        <id>Q8N0S2</id>
        <label>SYCE1</label>
    </interactant>
    <organismsDiffer>false</organismsDiffer>
    <experiments>3</experiments>
</comment>
<comment type="interaction">
    <interactant intactId="EBI-741945">
        <id>Q9BRG1</id>
    </interactant>
    <interactant intactId="EBI-742268">
        <id>O75478</id>
        <label>TADA2A</label>
    </interactant>
    <organismsDiffer>false</organismsDiffer>
    <experiments>3</experiments>
</comment>
<comment type="interaction">
    <interactant intactId="EBI-741945">
        <id>Q9BRG1</id>
    </interactant>
    <interactant intactId="EBI-719493">
        <id>P14373</id>
        <label>TRIM27</label>
    </interactant>
    <organismsDiffer>false</organismsDiffer>
    <experiments>7</experiments>
</comment>
<comment type="interaction">
    <interactant intactId="EBI-741945">
        <id>Q9BRG1</id>
    </interactant>
    <interactant intactId="EBI-4401822">
        <id>Q86VN1</id>
        <label>VPS36</label>
    </interactant>
    <organismsDiffer>false</organismsDiffer>
    <experiments>10</experiments>
</comment>
<comment type="subcellular location">
    <subcellularLocation>
        <location>Cytoplasm</location>
    </subcellularLocation>
    <subcellularLocation>
        <location>Endosome membrane</location>
    </subcellularLocation>
    <subcellularLocation>
        <location>Nucleus</location>
        <location>Nucleoplasm</location>
    </subcellularLocation>
    <text>Distributes diffusely throughout the cytoplasm and nucleoplasm, but exhibits a punctate distribution on coexpression with CHMP6.</text>
</comment>
<comment type="tissue specificity">
    <text evidence="6">Expressed at the mRNA level in kidney, liver, pancreas, and placenta. Lower levels of expression are found in heart, skeletal muscle, brain and lung.</text>
</comment>
<comment type="similarity">
    <text evidence="11">Belongs to the VPS25 family.</text>
</comment>
<dbReference type="EMBL" id="AB014763">
    <property type="protein sequence ID" value="BAB87804.1"/>
    <property type="molecule type" value="mRNA"/>
</dbReference>
<dbReference type="EMBL" id="AK312092">
    <property type="protein sequence ID" value="BAG35028.1"/>
    <property type="molecule type" value="mRNA"/>
</dbReference>
<dbReference type="EMBL" id="CH471152">
    <property type="protein sequence ID" value="EAW60879.1"/>
    <property type="molecule type" value="Genomic_DNA"/>
</dbReference>
<dbReference type="EMBL" id="BC006282">
    <property type="protein sequence ID" value="AAH06282.1"/>
    <property type="molecule type" value="mRNA"/>
</dbReference>
<dbReference type="CCDS" id="CCDS11438.1"/>
<dbReference type="RefSeq" id="NP_115729.1">
    <property type="nucleotide sequence ID" value="NM_032353.4"/>
</dbReference>
<dbReference type="PDB" id="2ZME">
    <property type="method" value="X-ray"/>
    <property type="resolution" value="2.90 A"/>
    <property type="chains" value="C/D=1-102"/>
</dbReference>
<dbReference type="PDB" id="3CUQ">
    <property type="method" value="X-ray"/>
    <property type="resolution" value="2.61 A"/>
    <property type="chains" value="C/D=1-176"/>
</dbReference>
<dbReference type="PDB" id="3HTU">
    <property type="method" value="X-ray"/>
    <property type="resolution" value="2.00 A"/>
    <property type="chains" value="A/C/E/G=102-176"/>
</dbReference>
<dbReference type="PDBsum" id="2ZME"/>
<dbReference type="PDBsum" id="3CUQ"/>
<dbReference type="PDBsum" id="3HTU"/>
<dbReference type="SMR" id="Q9BRG1"/>
<dbReference type="BioGRID" id="124039">
    <property type="interactions" value="75"/>
</dbReference>
<dbReference type="ComplexPortal" id="CPX-2506">
    <property type="entry name" value="ESCRT-II complex"/>
</dbReference>
<dbReference type="CORUM" id="Q9BRG1"/>
<dbReference type="FunCoup" id="Q9BRG1">
    <property type="interactions" value="2723"/>
</dbReference>
<dbReference type="IntAct" id="Q9BRG1">
    <property type="interactions" value="42"/>
</dbReference>
<dbReference type="MINT" id="Q9BRG1"/>
<dbReference type="STRING" id="9606.ENSP00000253794"/>
<dbReference type="GlyGen" id="Q9BRG1">
    <property type="glycosylation" value="1 site, 1 O-linked glycan (1 site)"/>
</dbReference>
<dbReference type="iPTMnet" id="Q9BRG1"/>
<dbReference type="PhosphoSitePlus" id="Q9BRG1"/>
<dbReference type="BioMuta" id="VPS25"/>
<dbReference type="DMDM" id="73920459"/>
<dbReference type="jPOST" id="Q9BRG1"/>
<dbReference type="MassIVE" id="Q9BRG1"/>
<dbReference type="PaxDb" id="9606-ENSP00000253794"/>
<dbReference type="PeptideAtlas" id="Q9BRG1"/>
<dbReference type="ProteomicsDB" id="78762"/>
<dbReference type="Pumba" id="Q9BRG1"/>
<dbReference type="Antibodypedia" id="29407">
    <property type="antibodies" value="224 antibodies from 30 providers"/>
</dbReference>
<dbReference type="DNASU" id="84313"/>
<dbReference type="Ensembl" id="ENST00000253794.7">
    <property type="protein sequence ID" value="ENSP00000253794.1"/>
    <property type="gene ID" value="ENSG00000131475.7"/>
</dbReference>
<dbReference type="GeneID" id="84313"/>
<dbReference type="KEGG" id="hsa:84313"/>
<dbReference type="MANE-Select" id="ENST00000253794.7">
    <property type="protein sequence ID" value="ENSP00000253794.1"/>
    <property type="RefSeq nucleotide sequence ID" value="NM_032353.4"/>
    <property type="RefSeq protein sequence ID" value="NP_115729.1"/>
</dbReference>
<dbReference type="UCSC" id="uc002ibi.5">
    <property type="organism name" value="human"/>
</dbReference>
<dbReference type="AGR" id="HGNC:28122"/>
<dbReference type="CTD" id="84313"/>
<dbReference type="DisGeNET" id="84313"/>
<dbReference type="GeneCards" id="VPS25"/>
<dbReference type="HGNC" id="HGNC:28122">
    <property type="gene designation" value="VPS25"/>
</dbReference>
<dbReference type="HPA" id="ENSG00000131475">
    <property type="expression patterns" value="Low tissue specificity"/>
</dbReference>
<dbReference type="MIM" id="610907">
    <property type="type" value="gene"/>
</dbReference>
<dbReference type="neXtProt" id="NX_Q9BRG1"/>
<dbReference type="OpenTargets" id="ENSG00000131475"/>
<dbReference type="PharmGKB" id="PA142670614"/>
<dbReference type="VEuPathDB" id="HostDB:ENSG00000131475"/>
<dbReference type="eggNOG" id="KOG4068">
    <property type="taxonomic scope" value="Eukaryota"/>
</dbReference>
<dbReference type="GeneTree" id="ENSGT00390000014892"/>
<dbReference type="HOGENOM" id="CLU_087657_0_1_1"/>
<dbReference type="InParanoid" id="Q9BRG1"/>
<dbReference type="OMA" id="TRCLIMW"/>
<dbReference type="OrthoDB" id="245150at2759"/>
<dbReference type="PAN-GO" id="Q9BRG1">
    <property type="GO annotations" value="4 GO annotations based on evolutionary models"/>
</dbReference>
<dbReference type="PhylomeDB" id="Q9BRG1"/>
<dbReference type="TreeFam" id="TF317731"/>
<dbReference type="PathwayCommons" id="Q9BRG1"/>
<dbReference type="Reactome" id="R-HSA-917729">
    <property type="pathway name" value="Endosomal Sorting Complex Required For Transport (ESCRT)"/>
</dbReference>
<dbReference type="Reactome" id="R-HSA-9610379">
    <property type="pathway name" value="HCMV Late Events"/>
</dbReference>
<dbReference type="SignaLink" id="Q9BRG1"/>
<dbReference type="BioGRID-ORCS" id="84313">
    <property type="hits" value="829 hits in 1167 CRISPR screens"/>
</dbReference>
<dbReference type="ChiTaRS" id="VPS25">
    <property type="organism name" value="human"/>
</dbReference>
<dbReference type="EvolutionaryTrace" id="Q9BRG1"/>
<dbReference type="GeneWiki" id="VPS25"/>
<dbReference type="GenomeRNAi" id="84313"/>
<dbReference type="Pharos" id="Q9BRG1">
    <property type="development level" value="Tbio"/>
</dbReference>
<dbReference type="PRO" id="PR:Q9BRG1"/>
<dbReference type="Proteomes" id="UP000005640">
    <property type="component" value="Chromosome 17"/>
</dbReference>
<dbReference type="RNAct" id="Q9BRG1">
    <property type="molecule type" value="protein"/>
</dbReference>
<dbReference type="Bgee" id="ENSG00000131475">
    <property type="expression patterns" value="Expressed in mucosa of transverse colon and 178 other cell types or tissues"/>
</dbReference>
<dbReference type="ExpressionAtlas" id="Q9BRG1">
    <property type="expression patterns" value="baseline and differential"/>
</dbReference>
<dbReference type="GO" id="GO:0005737">
    <property type="term" value="C:cytoplasm"/>
    <property type="evidence" value="ECO:0000314"/>
    <property type="project" value="UniProtKB"/>
</dbReference>
<dbReference type="GO" id="GO:0005829">
    <property type="term" value="C:cytosol"/>
    <property type="evidence" value="ECO:0000314"/>
    <property type="project" value="UniProtKB"/>
</dbReference>
<dbReference type="GO" id="GO:0010008">
    <property type="term" value="C:endosome membrane"/>
    <property type="evidence" value="ECO:0000314"/>
    <property type="project" value="UniProtKB"/>
</dbReference>
<dbReference type="GO" id="GO:0000814">
    <property type="term" value="C:ESCRT II complex"/>
    <property type="evidence" value="ECO:0000314"/>
    <property type="project" value="UniProtKB"/>
</dbReference>
<dbReference type="GO" id="GO:0070062">
    <property type="term" value="C:extracellular exosome"/>
    <property type="evidence" value="ECO:0007005"/>
    <property type="project" value="UniProtKB"/>
</dbReference>
<dbReference type="GO" id="GO:0043231">
    <property type="term" value="C:intracellular membrane-bounded organelle"/>
    <property type="evidence" value="ECO:0000314"/>
    <property type="project" value="HPA"/>
</dbReference>
<dbReference type="GO" id="GO:0005654">
    <property type="term" value="C:nucleoplasm"/>
    <property type="evidence" value="ECO:0007669"/>
    <property type="project" value="UniProtKB-SubCell"/>
</dbReference>
<dbReference type="GO" id="GO:0005634">
    <property type="term" value="C:nucleus"/>
    <property type="evidence" value="ECO:0000314"/>
    <property type="project" value="UniProtKB"/>
</dbReference>
<dbReference type="GO" id="GO:0042803">
    <property type="term" value="F:protein homodimerization activity"/>
    <property type="evidence" value="ECO:0000353"/>
    <property type="project" value="UniProtKB"/>
</dbReference>
<dbReference type="GO" id="GO:0005198">
    <property type="term" value="F:structural molecule activity"/>
    <property type="evidence" value="ECO:0000318"/>
    <property type="project" value="GO_Central"/>
</dbReference>
<dbReference type="GO" id="GO:0016236">
    <property type="term" value="P:macroautophagy"/>
    <property type="evidence" value="ECO:0000304"/>
    <property type="project" value="ParkinsonsUK-UCL"/>
</dbReference>
<dbReference type="GO" id="GO:0090148">
    <property type="term" value="P:membrane fission"/>
    <property type="evidence" value="ECO:0000303"/>
    <property type="project" value="ComplexPortal"/>
</dbReference>
<dbReference type="GO" id="GO:0036258">
    <property type="term" value="P:multivesicular body assembly"/>
    <property type="evidence" value="ECO:0000304"/>
    <property type="project" value="ParkinsonsUK-UCL"/>
</dbReference>
<dbReference type="GO" id="GO:0007175">
    <property type="term" value="P:negative regulation of epidermal growth factor-activated receptor activity"/>
    <property type="evidence" value="ECO:0000315"/>
    <property type="project" value="UniProtKB"/>
</dbReference>
<dbReference type="GO" id="GO:0043328">
    <property type="term" value="P:protein transport to vacuole involved in ubiquitin-dependent protein catabolic process via the multivesicular body sorting pathway"/>
    <property type="evidence" value="ECO:0000318"/>
    <property type="project" value="GO_Central"/>
</dbReference>
<dbReference type="DisProt" id="DP01598"/>
<dbReference type="FunFam" id="1.10.10.10:FF:000141">
    <property type="entry name" value="vacuolar protein-sorting-associated protein 25"/>
    <property type="match status" value="1"/>
</dbReference>
<dbReference type="FunFam" id="1.10.10.570:FF:000001">
    <property type="entry name" value="vacuolar protein-sorting-associated protein 25"/>
    <property type="match status" value="1"/>
</dbReference>
<dbReference type="Gene3D" id="1.10.10.570">
    <property type="entry name" value="Winged helix' DNA-binding domain. Chain C. Domain 1"/>
    <property type="match status" value="1"/>
</dbReference>
<dbReference type="Gene3D" id="1.10.10.10">
    <property type="entry name" value="Winged helix-like DNA-binding domain superfamily/Winged helix DNA-binding domain"/>
    <property type="match status" value="1"/>
</dbReference>
<dbReference type="InterPro" id="IPR008570">
    <property type="entry name" value="ESCRT-II_cplx_Vps25-sub"/>
</dbReference>
<dbReference type="InterPro" id="IPR014041">
    <property type="entry name" value="ESCRT-II_cplx_Vps25-sub_N"/>
</dbReference>
<dbReference type="InterPro" id="IPR036388">
    <property type="entry name" value="WH-like_DNA-bd_sf"/>
</dbReference>
<dbReference type="InterPro" id="IPR036390">
    <property type="entry name" value="WH_DNA-bd_sf"/>
</dbReference>
<dbReference type="PANTHER" id="PTHR13149">
    <property type="entry name" value="VACUOLAR PROTEIN SORTING-ASSOCIATED PROTEIN VPS25"/>
    <property type="match status" value="1"/>
</dbReference>
<dbReference type="PANTHER" id="PTHR13149:SF0">
    <property type="entry name" value="VACUOLAR PROTEIN-SORTING-ASSOCIATED PROTEIN 25"/>
    <property type="match status" value="1"/>
</dbReference>
<dbReference type="Pfam" id="PF05871">
    <property type="entry name" value="ESCRT-II"/>
    <property type="match status" value="1"/>
</dbReference>
<dbReference type="SUPFAM" id="SSF46785">
    <property type="entry name" value="Winged helix' DNA-binding domain"/>
    <property type="match status" value="2"/>
</dbReference>
<organism>
    <name type="scientific">Homo sapiens</name>
    <name type="common">Human</name>
    <dbReference type="NCBI Taxonomy" id="9606"/>
    <lineage>
        <taxon>Eukaryota</taxon>
        <taxon>Metazoa</taxon>
        <taxon>Chordata</taxon>
        <taxon>Craniata</taxon>
        <taxon>Vertebrata</taxon>
        <taxon>Euteleostomi</taxon>
        <taxon>Mammalia</taxon>
        <taxon>Eutheria</taxon>
        <taxon>Euarchontoglires</taxon>
        <taxon>Primates</taxon>
        <taxon>Haplorrhini</taxon>
        <taxon>Catarrhini</taxon>
        <taxon>Hominidae</taxon>
        <taxon>Homo</taxon>
    </lineage>
</organism>
<evidence type="ECO:0000250" key="1"/>
<evidence type="ECO:0000269" key="2">
    <source>
    </source>
</evidence>
<evidence type="ECO:0000269" key="3">
    <source>
    </source>
</evidence>
<evidence type="ECO:0000269" key="4">
    <source>
    </source>
</evidence>
<evidence type="ECO:0000269" key="5">
    <source>
    </source>
</evidence>
<evidence type="ECO:0000269" key="6">
    <source>
    </source>
</evidence>
<evidence type="ECO:0000269" key="7">
    <source>
    </source>
</evidence>
<evidence type="ECO:0000269" key="8">
    <source>
    </source>
</evidence>
<evidence type="ECO:0000269" key="9">
    <source>
    </source>
</evidence>
<evidence type="ECO:0000269" key="10">
    <source>
    </source>
</evidence>
<evidence type="ECO:0000305" key="11"/>
<evidence type="ECO:0007829" key="12">
    <source>
        <dbReference type="PDB" id="3CUQ"/>
    </source>
</evidence>
<evidence type="ECO:0007829" key="13">
    <source>
        <dbReference type="PDB" id="3HTU"/>
    </source>
</evidence>
<feature type="chain" id="PRO_0000215216" description="Vacuolar protein-sorting-associated protein 25">
    <location>
        <begin position="1"/>
        <end position="176"/>
    </location>
</feature>
<feature type="sequence variant" id="VAR_048940" description="In dbSNP:rs34494804.">
    <original>I</original>
    <variation>V</variation>
    <location>
        <position position="76"/>
    </location>
</feature>
<feature type="mutagenesis site" description="Abolishes binding to CHMP6." evidence="10">
    <original>V</original>
    <variation>E</variation>
    <location>
        <position position="124"/>
    </location>
</feature>
<feature type="mutagenesis site" description="Abolishes binding to CHMP6." evidence="10">
    <original>T</original>
    <variation>K</variation>
    <location>
        <position position="126"/>
    </location>
</feature>
<feature type="helix" evidence="12">
    <location>
        <begin position="9"/>
        <end position="12"/>
    </location>
</feature>
<feature type="helix" evidence="12">
    <location>
        <begin position="14"/>
        <end position="17"/>
    </location>
</feature>
<feature type="helix" evidence="12">
    <location>
        <begin position="23"/>
        <end position="44"/>
    </location>
</feature>
<feature type="strand" evidence="12">
    <location>
        <begin position="48"/>
        <end position="50"/>
    </location>
</feature>
<feature type="helix" evidence="12">
    <location>
        <begin position="51"/>
        <end position="55"/>
    </location>
</feature>
<feature type="strand" evidence="12">
    <location>
        <begin position="60"/>
        <end position="62"/>
    </location>
</feature>
<feature type="turn" evidence="12">
    <location>
        <begin position="63"/>
        <end position="66"/>
    </location>
</feature>
<feature type="helix" evidence="12">
    <location>
        <begin position="71"/>
        <end position="84"/>
    </location>
</feature>
<feature type="strand" evidence="12">
    <location>
        <begin position="86"/>
        <end position="89"/>
    </location>
</feature>
<feature type="strand" evidence="12">
    <location>
        <begin position="91"/>
        <end position="99"/>
    </location>
</feature>
<feature type="helix" evidence="13">
    <location>
        <begin position="104"/>
        <end position="116"/>
    </location>
</feature>
<feature type="turn" evidence="12">
    <location>
        <begin position="117"/>
        <end position="119"/>
    </location>
</feature>
<feature type="strand" evidence="13">
    <location>
        <begin position="123"/>
        <end position="125"/>
    </location>
</feature>
<feature type="helix" evidence="13">
    <location>
        <begin position="127"/>
        <end position="132"/>
    </location>
</feature>
<feature type="turn" evidence="13">
    <location>
        <begin position="135"/>
        <end position="138"/>
    </location>
</feature>
<feature type="turn" evidence="13">
    <location>
        <begin position="140"/>
        <end position="143"/>
    </location>
</feature>
<feature type="helix" evidence="13">
    <location>
        <begin position="146"/>
        <end position="158"/>
    </location>
</feature>
<feature type="strand" evidence="13">
    <location>
        <begin position="161"/>
        <end position="165"/>
    </location>
</feature>
<feature type="turn" evidence="12">
    <location>
        <begin position="167"/>
        <end position="169"/>
    </location>
</feature>
<feature type="strand" evidence="13">
    <location>
        <begin position="172"/>
        <end position="175"/>
    </location>
</feature>
<keyword id="KW-0002">3D-structure</keyword>
<keyword id="KW-0963">Cytoplasm</keyword>
<keyword id="KW-0967">Endosome</keyword>
<keyword id="KW-0472">Membrane</keyword>
<keyword id="KW-0539">Nucleus</keyword>
<keyword id="KW-0653">Protein transport</keyword>
<keyword id="KW-1267">Proteomics identification</keyword>
<keyword id="KW-1185">Reference proteome</keyword>
<keyword id="KW-0804">Transcription</keyword>
<keyword id="KW-0805">Transcription regulation</keyword>
<keyword id="KW-0813">Transport</keyword>
<protein>
    <recommendedName>
        <fullName>Vacuolar protein-sorting-associated protein 25</fullName>
        <shortName>hVps25</shortName>
    </recommendedName>
    <alternativeName>
        <fullName>Dermal papilla-derived protein 9</fullName>
    </alternativeName>
    <alternativeName>
        <fullName>ELL-associated protein of 20 kDa</fullName>
    </alternativeName>
    <alternativeName>
        <fullName>ESCRT-II complex subunit VPS25</fullName>
    </alternativeName>
</protein>